<dbReference type="EMBL" id="CP000853">
    <property type="protein sequence ID" value="ABW18952.1"/>
    <property type="molecule type" value="Genomic_DNA"/>
</dbReference>
<dbReference type="RefSeq" id="WP_012159264.1">
    <property type="nucleotide sequence ID" value="NC_009922.1"/>
</dbReference>
<dbReference type="SMR" id="A8MH65"/>
<dbReference type="STRING" id="350688.Clos_1408"/>
<dbReference type="KEGG" id="aoe:Clos_1408"/>
<dbReference type="eggNOG" id="COG1799">
    <property type="taxonomic scope" value="Bacteria"/>
</dbReference>
<dbReference type="HOGENOM" id="CLU_078499_4_0_9"/>
<dbReference type="OrthoDB" id="9815206at2"/>
<dbReference type="Proteomes" id="UP000000269">
    <property type="component" value="Chromosome"/>
</dbReference>
<dbReference type="GO" id="GO:0005737">
    <property type="term" value="C:cytoplasm"/>
    <property type="evidence" value="ECO:0007669"/>
    <property type="project" value="UniProtKB-SubCell"/>
</dbReference>
<dbReference type="GO" id="GO:0000917">
    <property type="term" value="P:division septum assembly"/>
    <property type="evidence" value="ECO:0007669"/>
    <property type="project" value="UniProtKB-KW"/>
</dbReference>
<dbReference type="GO" id="GO:0043093">
    <property type="term" value="P:FtsZ-dependent cytokinesis"/>
    <property type="evidence" value="ECO:0007669"/>
    <property type="project" value="UniProtKB-UniRule"/>
</dbReference>
<dbReference type="Gene3D" id="3.30.110.150">
    <property type="entry name" value="SepF-like protein"/>
    <property type="match status" value="1"/>
</dbReference>
<dbReference type="HAMAP" id="MF_01197">
    <property type="entry name" value="SepF"/>
    <property type="match status" value="1"/>
</dbReference>
<dbReference type="InterPro" id="IPR023052">
    <property type="entry name" value="Cell_div_SepF"/>
</dbReference>
<dbReference type="InterPro" id="IPR007561">
    <property type="entry name" value="Cell_div_SepF/SepF-rel"/>
</dbReference>
<dbReference type="InterPro" id="IPR038594">
    <property type="entry name" value="SepF-like_sf"/>
</dbReference>
<dbReference type="PANTHER" id="PTHR35798">
    <property type="entry name" value="CELL DIVISION PROTEIN SEPF"/>
    <property type="match status" value="1"/>
</dbReference>
<dbReference type="PANTHER" id="PTHR35798:SF1">
    <property type="entry name" value="CELL DIVISION PROTEIN SEPF"/>
    <property type="match status" value="1"/>
</dbReference>
<dbReference type="Pfam" id="PF04472">
    <property type="entry name" value="SepF"/>
    <property type="match status" value="1"/>
</dbReference>
<gene>
    <name evidence="1" type="primary">sepF</name>
    <name type="ordered locus">Clos_1408</name>
</gene>
<feature type="chain" id="PRO_0000333969" description="Cell division protein SepF">
    <location>
        <begin position="1"/>
        <end position="146"/>
    </location>
</feature>
<evidence type="ECO:0000255" key="1">
    <source>
        <dbReference type="HAMAP-Rule" id="MF_01197"/>
    </source>
</evidence>
<comment type="function">
    <text evidence="1">Cell division protein that is part of the divisome complex and is recruited early to the Z-ring. Probably stimulates Z-ring formation, perhaps through the cross-linking of FtsZ protofilaments. Its function overlaps with FtsA.</text>
</comment>
<comment type="subunit">
    <text evidence="1">Homodimer. Interacts with FtsZ.</text>
</comment>
<comment type="subcellular location">
    <subcellularLocation>
        <location evidence="1">Cytoplasm</location>
    </subcellularLocation>
    <text evidence="1">Localizes to the division site, in a FtsZ-dependent manner.</text>
</comment>
<comment type="similarity">
    <text evidence="1">Belongs to the SepF family.</text>
</comment>
<reference key="1">
    <citation type="submission" date="2007-10" db="EMBL/GenBank/DDBJ databases">
        <title>Complete genome of Alkaliphilus oremlandii OhILAs.</title>
        <authorList>
            <person name="Copeland A."/>
            <person name="Lucas S."/>
            <person name="Lapidus A."/>
            <person name="Barry K."/>
            <person name="Detter J.C."/>
            <person name="Glavina del Rio T."/>
            <person name="Hammon N."/>
            <person name="Israni S."/>
            <person name="Dalin E."/>
            <person name="Tice H."/>
            <person name="Pitluck S."/>
            <person name="Chain P."/>
            <person name="Malfatti S."/>
            <person name="Shin M."/>
            <person name="Vergez L."/>
            <person name="Schmutz J."/>
            <person name="Larimer F."/>
            <person name="Land M."/>
            <person name="Hauser L."/>
            <person name="Kyrpides N."/>
            <person name="Mikhailova N."/>
            <person name="Stolz J.F."/>
            <person name="Dawson A."/>
            <person name="Fisher E."/>
            <person name="Crable B."/>
            <person name="Perera E."/>
            <person name="Lisak J."/>
            <person name="Ranganathan M."/>
            <person name="Basu P."/>
            <person name="Richardson P."/>
        </authorList>
    </citation>
    <scope>NUCLEOTIDE SEQUENCE [LARGE SCALE GENOMIC DNA]</scope>
    <source>
        <strain>OhILAs</strain>
    </source>
</reference>
<protein>
    <recommendedName>
        <fullName evidence="1">Cell division protein SepF</fullName>
    </recommendedName>
</protein>
<keyword id="KW-0131">Cell cycle</keyword>
<keyword id="KW-0132">Cell division</keyword>
<keyword id="KW-0963">Cytoplasm</keyword>
<keyword id="KW-1185">Reference proteome</keyword>
<keyword id="KW-0717">Septation</keyword>
<sequence>MSGKIIDKVKVFMGFDVFEDEEVEEEETVEIEDELVPVMNSKRNKVVNIHTTTQMKVVLYEPTNFEEAPNIVDNLKNRKPVIINLENIEPDLAKKFFDFLNGAIYALDGNIQKVSSGIFILAPNNVDISGNIKEELKNKGVFPWQK</sequence>
<organism>
    <name type="scientific">Alkaliphilus oremlandii (strain OhILAs)</name>
    <name type="common">Clostridium oremlandii (strain OhILAs)</name>
    <dbReference type="NCBI Taxonomy" id="350688"/>
    <lineage>
        <taxon>Bacteria</taxon>
        <taxon>Bacillati</taxon>
        <taxon>Bacillota</taxon>
        <taxon>Clostridia</taxon>
        <taxon>Peptostreptococcales</taxon>
        <taxon>Natronincolaceae</taxon>
        <taxon>Alkaliphilus</taxon>
    </lineage>
</organism>
<name>SEPF_ALKOO</name>
<proteinExistence type="inferred from homology"/>
<accession>A8MH65</accession>